<comment type="function">
    <text evidence="4 5">Catalyzes the transfer of phosphatidylinositol (PI) and phosphatidic acid (PA) between membranes (PubMed:22822086). May control phosphatidylinositol concentration in transport vesicles from the subrhabdomeric cisternae (SRC) to the rhabdomere (PubMed:1903119). May function as a calcium transporter (PubMed:1903119).</text>
</comment>
<comment type="catalytic activity">
    <reaction evidence="5">
        <text>a 1,2-diacyl-sn-glycero-3-phospho-(1D-myo-inositol)(in) = a 1,2-diacyl-sn-glycero-3-phospho-(1D-myo-inositol)(out)</text>
        <dbReference type="Rhea" id="RHEA:38691"/>
        <dbReference type="ChEBI" id="CHEBI:57880"/>
    </reaction>
    <physiologicalReaction direction="left-to-right" evidence="9">
        <dbReference type="Rhea" id="RHEA:38692"/>
    </physiologicalReaction>
</comment>
<comment type="catalytic activity">
    <reaction evidence="5">
        <text>a 1,2-diacyl-sn-glycero-3-phosphate(in) = a 1,2-diacyl-sn-glycero-3-phosphate(out)</text>
        <dbReference type="Rhea" id="RHEA:36435"/>
        <dbReference type="ChEBI" id="CHEBI:58608"/>
    </reaction>
    <physiologicalReaction direction="left-to-right" evidence="9">
        <dbReference type="Rhea" id="RHEA:36436"/>
    </physiologicalReaction>
</comment>
<comment type="alternative products">
    <event type="alternative splicing"/>
    <isoform>
        <id>P43125-1</id>
        <name>A</name>
        <name>C</name>
        <name>D</name>
        <sequence type="displayed"/>
    </isoform>
    <isoform>
        <id>P43125-2</id>
        <name>B</name>
        <sequence type="described" ref="VSP_014533"/>
    </isoform>
</comment>
<comment type="tissue specificity">
    <text evidence="4">Expressed in adult heads, not detected in bodies.</text>
</comment>
<comment type="disruption phenotype">
    <text evidence="4">Flies exhibit rapid light-induced retinal degeneration.</text>
</comment>
<comment type="similarity">
    <text evidence="8">Belongs to the PtdIns transfer protein family. PI transfer class IIA subfamily.</text>
</comment>
<comment type="sequence caution" evidence="8">
    <conflict type="miscellaneous discrepancy">
        <sequence resource="EMBL-CDS" id="AAR82797"/>
    </conflict>
    <text>Intron retention.</text>
</comment>
<comment type="sequence caution" evidence="8">
    <conflict type="frameshift">
        <sequence resource="EMBL-CDS" id="CAA41044"/>
    </conflict>
</comment>
<protein>
    <recommendedName>
        <fullName>Protein retinal degeneration B</fullName>
    </recommendedName>
    <alternativeName>
        <fullName>Probable calcium transporter rdgB</fullName>
    </alternativeName>
</protein>
<sequence length="1259" mass="138895">MLIKEYRIPLPLTVEEYRIAQLYMIAKKSREESHGEGSGVEIIINEPYKDGPGGNGQYTKKIYHVGNHLPGWIKSLLPKSALTVEEEAWNAYPYTRTRYTCPFVEKFSLDIETYYYPDNGYQDNVFQLSGSDLRNRIVDVIDIVKDQLWGGDYVKEEDPKHFVSDKTGRGPLAEDWLEEYWREVKGKKQPTPRNMSLMTAYKICRVEFRYWGMQTKLEKFIHDVALRKMMLRAHRQAWAWQDEWFGLTIEDIRELERQTQLALAKKMGGGEECSDDSVSEPYVSTAATAASTTGSERKKSAPAVPPIVTQQPPSAEASSDEEGEEEEDDDEDENDAIGTGVDLSANQGGSAQRSRSQSIQMAQKGKFGSKGALHSPVGSAHSFDLQVANWRMERLEVDSKSNSDEEFFDCLDTNETNSLAKWSSLELLGEGDDSPPPHGGPSSAASVGGRGNSRQEDSIFNQDFLMRVASERGNKRQLRSSASVDRSHDSSPPGSPSTPSCPTTILILVVHAGSVLDAASELTAKKSDVTTFRGSFEAVMRQHYPSLLTHVTIKMVPCPSICTDALGILSSLSPYSFDASPSAADIPNIADVPIGAIPLLSVASPEFHETVNKTVAAANIVYHEFLKSEEGHGFSGQIVMLGDSMGSLLAYEALCRSNGSQPGTASGASNSGGDAATNINTHNPLSPRNSRLDDDERFIEADLDAKRLLVAPSPRRRRSSSSSDSRATKLDFEVCDFFMFGSPLSVVLAARKLHDAKAALPRPNCHQVYNLFHPTDPIASRLEPLLSARFSILAPVNVPRYAKYPLGNGQPLHLLEVIQSHPQHFNDGNNLLAGRRLSDASMQSTISGLIENVSLSTIHALQNKWWGTKRLDYALYCPEGLSNFPAHALPHLFHASYWESPDVIAFILRQIGKFEGIPFVGSNDDKDNASFHPGQPREKWIKKRTSVKLKNVAANHRANDVIVQEGREQRLNARFMYGPLDMITLHGEKVDVHIMKDPPAGEWTFLSTEVTDKNGRISYSIPDQVSLGYGIYPVKMVVRGDHTSVDCYMAVVPPLTECVVFSIDGSFTASMSVTGRDPKVRAGAVDVCRHWQELGYLLIYITGRPDMQQQRVVSWLSQHNFPHGLISFADGLSTDPLGHKTAYLNNLVQNHGISITAAYGSSKDISVYTNVGMRTDQIFIVGKVGKKLQSNATVLSDGYAAHLAGLQAVGGSRPAKGNARMVIPRGCFNLPGQTANPRRRRYLERKTVSSCCLMVFQTT</sequence>
<evidence type="ECO:0000255" key="1">
    <source>
        <dbReference type="PROSITE-ProRule" id="PRU00378"/>
    </source>
</evidence>
<evidence type="ECO:0000256" key="2">
    <source>
        <dbReference type="SAM" id="MobiDB-lite"/>
    </source>
</evidence>
<evidence type="ECO:0000269" key="3">
    <source>
    </source>
</evidence>
<evidence type="ECO:0000269" key="4">
    <source>
    </source>
</evidence>
<evidence type="ECO:0000269" key="5">
    <source>
    </source>
</evidence>
<evidence type="ECO:0000303" key="6">
    <source>
    </source>
</evidence>
<evidence type="ECO:0000303" key="7">
    <source>
    </source>
</evidence>
<evidence type="ECO:0000305" key="8"/>
<evidence type="ECO:0000305" key="9">
    <source>
    </source>
</evidence>
<name>RDGB_DROME</name>
<accession>P43125</accession>
<accession>A4V4E8</accession>
<accession>O02434</accession>
<accession>Q6NP01</accession>
<accession>Q961R2</accession>
<accession>Q9VY88</accession>
<proteinExistence type="evidence at protein level"/>
<keyword id="KW-0025">Alternative splicing</keyword>
<keyword id="KW-0106">Calcium</keyword>
<keyword id="KW-0109">Calcium transport</keyword>
<keyword id="KW-0406">Ion transport</keyword>
<keyword id="KW-0597">Phosphoprotein</keyword>
<keyword id="KW-1185">Reference proteome</keyword>
<keyword id="KW-0716">Sensory transduction</keyword>
<keyword id="KW-0813">Transport</keyword>
<keyword id="KW-0844">Vision</keyword>
<organism>
    <name type="scientific">Drosophila melanogaster</name>
    <name type="common">Fruit fly</name>
    <dbReference type="NCBI Taxonomy" id="7227"/>
    <lineage>
        <taxon>Eukaryota</taxon>
        <taxon>Metazoa</taxon>
        <taxon>Ecdysozoa</taxon>
        <taxon>Arthropoda</taxon>
        <taxon>Hexapoda</taxon>
        <taxon>Insecta</taxon>
        <taxon>Pterygota</taxon>
        <taxon>Neoptera</taxon>
        <taxon>Endopterygota</taxon>
        <taxon>Diptera</taxon>
        <taxon>Brachycera</taxon>
        <taxon>Muscomorpha</taxon>
        <taxon>Ephydroidea</taxon>
        <taxon>Drosophilidae</taxon>
        <taxon>Drosophila</taxon>
        <taxon>Sophophora</taxon>
    </lineage>
</organism>
<gene>
    <name type="primary">rdgB</name>
    <name type="ORF">CG11111</name>
</gene>
<reference key="1">
    <citation type="journal article" date="1991" name="Genetics">
        <title>Isolation and characterization of the Drosophila retinal degeneration B (rdgB) gene.</title>
        <authorList>
            <person name="Vihtelic T.S."/>
            <person name="Hyde D.R."/>
            <person name="O'Tousa J.E."/>
        </authorList>
    </citation>
    <scope>NUCLEOTIDE SEQUENCE [MRNA] (ISOFORM B)</scope>
    <scope>FUNCTION</scope>
    <scope>TISSUE SPECIFICITY</scope>
    <scope>DISRUPTION PHENOTYPE</scope>
    <source>
        <strain>Oregon-R</strain>
        <tissue>Head</tissue>
    </source>
</reference>
<reference key="2">
    <citation type="journal article" date="1997" name="Genes Funct.">
        <title>A mammalian homologue of the Drosophila retinal degeneration B gene: implications for the evolution of phototransduction mechanisms.</title>
        <authorList>
            <person name="Rubboli F."/>
            <person name="Bulfone A."/>
            <person name="Bogni S."/>
            <person name="Marchitiello A."/>
            <person name="Zollo M."/>
            <person name="Borsani G."/>
            <person name="Ballabio A."/>
            <person name="Banfi S."/>
        </authorList>
    </citation>
    <scope>NUCLEOTIDE SEQUENCE [MRNA] (ISOFORM B)</scope>
</reference>
<reference key="3">
    <citation type="journal article" date="2000" name="Science">
        <title>The genome sequence of Drosophila melanogaster.</title>
        <authorList>
            <person name="Adams M.D."/>
            <person name="Celniker S.E."/>
            <person name="Holt R.A."/>
            <person name="Evans C.A."/>
            <person name="Gocayne J.D."/>
            <person name="Amanatides P.G."/>
            <person name="Scherer S.E."/>
            <person name="Li P.W."/>
            <person name="Hoskins R.A."/>
            <person name="Galle R.F."/>
            <person name="George R.A."/>
            <person name="Lewis S.E."/>
            <person name="Richards S."/>
            <person name="Ashburner M."/>
            <person name="Henderson S.N."/>
            <person name="Sutton G.G."/>
            <person name="Wortman J.R."/>
            <person name="Yandell M.D."/>
            <person name="Zhang Q."/>
            <person name="Chen L.X."/>
            <person name="Brandon R.C."/>
            <person name="Rogers Y.-H.C."/>
            <person name="Blazej R.G."/>
            <person name="Champe M."/>
            <person name="Pfeiffer B.D."/>
            <person name="Wan K.H."/>
            <person name="Doyle C."/>
            <person name="Baxter E.G."/>
            <person name="Helt G."/>
            <person name="Nelson C.R."/>
            <person name="Miklos G.L.G."/>
            <person name="Abril J.F."/>
            <person name="Agbayani A."/>
            <person name="An H.-J."/>
            <person name="Andrews-Pfannkoch C."/>
            <person name="Baldwin D."/>
            <person name="Ballew R.M."/>
            <person name="Basu A."/>
            <person name="Baxendale J."/>
            <person name="Bayraktaroglu L."/>
            <person name="Beasley E.M."/>
            <person name="Beeson K.Y."/>
            <person name="Benos P.V."/>
            <person name="Berman B.P."/>
            <person name="Bhandari D."/>
            <person name="Bolshakov S."/>
            <person name="Borkova D."/>
            <person name="Botchan M.R."/>
            <person name="Bouck J."/>
            <person name="Brokstein P."/>
            <person name="Brottier P."/>
            <person name="Burtis K.C."/>
            <person name="Busam D.A."/>
            <person name="Butler H."/>
            <person name="Cadieu E."/>
            <person name="Center A."/>
            <person name="Chandra I."/>
            <person name="Cherry J.M."/>
            <person name="Cawley S."/>
            <person name="Dahlke C."/>
            <person name="Davenport L.B."/>
            <person name="Davies P."/>
            <person name="de Pablos B."/>
            <person name="Delcher A."/>
            <person name="Deng Z."/>
            <person name="Mays A.D."/>
            <person name="Dew I."/>
            <person name="Dietz S.M."/>
            <person name="Dodson K."/>
            <person name="Doup L.E."/>
            <person name="Downes M."/>
            <person name="Dugan-Rocha S."/>
            <person name="Dunkov B.C."/>
            <person name="Dunn P."/>
            <person name="Durbin K.J."/>
            <person name="Evangelista C.C."/>
            <person name="Ferraz C."/>
            <person name="Ferriera S."/>
            <person name="Fleischmann W."/>
            <person name="Fosler C."/>
            <person name="Gabrielian A.E."/>
            <person name="Garg N.S."/>
            <person name="Gelbart W.M."/>
            <person name="Glasser K."/>
            <person name="Glodek A."/>
            <person name="Gong F."/>
            <person name="Gorrell J.H."/>
            <person name="Gu Z."/>
            <person name="Guan P."/>
            <person name="Harris M."/>
            <person name="Harris N.L."/>
            <person name="Harvey D.A."/>
            <person name="Heiman T.J."/>
            <person name="Hernandez J.R."/>
            <person name="Houck J."/>
            <person name="Hostin D."/>
            <person name="Houston K.A."/>
            <person name="Howland T.J."/>
            <person name="Wei M.-H."/>
            <person name="Ibegwam C."/>
            <person name="Jalali M."/>
            <person name="Kalush F."/>
            <person name="Karpen G.H."/>
            <person name="Ke Z."/>
            <person name="Kennison J.A."/>
            <person name="Ketchum K.A."/>
            <person name="Kimmel B.E."/>
            <person name="Kodira C.D."/>
            <person name="Kraft C.L."/>
            <person name="Kravitz S."/>
            <person name="Kulp D."/>
            <person name="Lai Z."/>
            <person name="Lasko P."/>
            <person name="Lei Y."/>
            <person name="Levitsky A.A."/>
            <person name="Li J.H."/>
            <person name="Li Z."/>
            <person name="Liang Y."/>
            <person name="Lin X."/>
            <person name="Liu X."/>
            <person name="Mattei B."/>
            <person name="McIntosh T.C."/>
            <person name="McLeod M.P."/>
            <person name="McPherson D."/>
            <person name="Merkulov G."/>
            <person name="Milshina N.V."/>
            <person name="Mobarry C."/>
            <person name="Morris J."/>
            <person name="Moshrefi A."/>
            <person name="Mount S.M."/>
            <person name="Moy M."/>
            <person name="Murphy B."/>
            <person name="Murphy L."/>
            <person name="Muzny D.M."/>
            <person name="Nelson D.L."/>
            <person name="Nelson D.R."/>
            <person name="Nelson K.A."/>
            <person name="Nixon K."/>
            <person name="Nusskern D.R."/>
            <person name="Pacleb J.M."/>
            <person name="Palazzolo M."/>
            <person name="Pittman G.S."/>
            <person name="Pan S."/>
            <person name="Pollard J."/>
            <person name="Puri V."/>
            <person name="Reese M.G."/>
            <person name="Reinert K."/>
            <person name="Remington K."/>
            <person name="Saunders R.D.C."/>
            <person name="Scheeler F."/>
            <person name="Shen H."/>
            <person name="Shue B.C."/>
            <person name="Siden-Kiamos I."/>
            <person name="Simpson M."/>
            <person name="Skupski M.P."/>
            <person name="Smith T.J."/>
            <person name="Spier E."/>
            <person name="Spradling A.C."/>
            <person name="Stapleton M."/>
            <person name="Strong R."/>
            <person name="Sun E."/>
            <person name="Svirskas R."/>
            <person name="Tector C."/>
            <person name="Turner R."/>
            <person name="Venter E."/>
            <person name="Wang A.H."/>
            <person name="Wang X."/>
            <person name="Wang Z.-Y."/>
            <person name="Wassarman D.A."/>
            <person name="Weinstock G.M."/>
            <person name="Weissenbach J."/>
            <person name="Williams S.M."/>
            <person name="Woodage T."/>
            <person name="Worley K.C."/>
            <person name="Wu D."/>
            <person name="Yang S."/>
            <person name="Yao Q.A."/>
            <person name="Ye J."/>
            <person name="Yeh R.-F."/>
            <person name="Zaveri J.S."/>
            <person name="Zhan M."/>
            <person name="Zhang G."/>
            <person name="Zhao Q."/>
            <person name="Zheng L."/>
            <person name="Zheng X.H."/>
            <person name="Zhong F.N."/>
            <person name="Zhong W."/>
            <person name="Zhou X."/>
            <person name="Zhu S.C."/>
            <person name="Zhu X."/>
            <person name="Smith H.O."/>
            <person name="Gibbs R.A."/>
            <person name="Myers E.W."/>
            <person name="Rubin G.M."/>
            <person name="Venter J.C."/>
        </authorList>
    </citation>
    <scope>NUCLEOTIDE SEQUENCE [LARGE SCALE GENOMIC DNA]</scope>
    <source>
        <strain>Berkeley</strain>
    </source>
</reference>
<reference key="4">
    <citation type="journal article" date="2002" name="Genome Biol.">
        <title>Annotation of the Drosophila melanogaster euchromatic genome: a systematic review.</title>
        <authorList>
            <person name="Misra S."/>
            <person name="Crosby M.A."/>
            <person name="Mungall C.J."/>
            <person name="Matthews B.B."/>
            <person name="Campbell K.S."/>
            <person name="Hradecky P."/>
            <person name="Huang Y."/>
            <person name="Kaminker J.S."/>
            <person name="Millburn G.H."/>
            <person name="Prochnik S.E."/>
            <person name="Smith C.D."/>
            <person name="Tupy J.L."/>
            <person name="Whitfield E.J."/>
            <person name="Bayraktaroglu L."/>
            <person name="Berman B.P."/>
            <person name="Bettencourt B.R."/>
            <person name="Celniker S.E."/>
            <person name="de Grey A.D.N.J."/>
            <person name="Drysdale R.A."/>
            <person name="Harris N.L."/>
            <person name="Richter J."/>
            <person name="Russo S."/>
            <person name="Schroeder A.J."/>
            <person name="Shu S.Q."/>
            <person name="Stapleton M."/>
            <person name="Yamada C."/>
            <person name="Ashburner M."/>
            <person name="Gelbart W.M."/>
            <person name="Rubin G.M."/>
            <person name="Lewis S.E."/>
        </authorList>
    </citation>
    <scope>GENOME REANNOTATION</scope>
    <scope>ALTERNATIVE SPLICING</scope>
    <source>
        <strain>Berkeley</strain>
    </source>
</reference>
<reference key="5">
    <citation type="journal article" date="2002" name="Genome Biol.">
        <title>A Drosophila full-length cDNA resource.</title>
        <authorList>
            <person name="Stapleton M."/>
            <person name="Carlson J.W."/>
            <person name="Brokstein P."/>
            <person name="Yu C."/>
            <person name="Champe M."/>
            <person name="George R.A."/>
            <person name="Guarin H."/>
            <person name="Kronmiller B."/>
            <person name="Pacleb J.M."/>
            <person name="Park S."/>
            <person name="Wan K.H."/>
            <person name="Rubin G.M."/>
            <person name="Celniker S.E."/>
        </authorList>
    </citation>
    <scope>NUCLEOTIDE SEQUENCE [LARGE SCALE MRNA] (ISOFORM A)</scope>
    <source>
        <strain>Berkeley</strain>
        <tissue>Head</tissue>
    </source>
</reference>
<reference key="6">
    <citation type="submission" date="2003-12" db="EMBL/GenBank/DDBJ databases">
        <authorList>
            <person name="Stapleton M."/>
            <person name="Brokstein P."/>
            <person name="Hong L."/>
            <person name="Agbayani A."/>
            <person name="Carlson J.W."/>
            <person name="Champe M."/>
            <person name="Chavez C."/>
            <person name="Dorsett V."/>
            <person name="Dresnek D."/>
            <person name="Farfan D."/>
            <person name="Frise E."/>
            <person name="George R.A."/>
            <person name="Gonzalez M."/>
            <person name="Guarin H."/>
            <person name="Kronmiller B."/>
            <person name="Li P.W."/>
            <person name="Liao G."/>
            <person name="Miranda A."/>
            <person name="Mungall C.J."/>
            <person name="Nunoo J."/>
            <person name="Pacleb J.M."/>
            <person name="Paragas V."/>
            <person name="Park S."/>
            <person name="Patel S."/>
            <person name="Phouanenavong S."/>
            <person name="Wan K.H."/>
            <person name="Yu C."/>
            <person name="Lewis S.E."/>
            <person name="Rubin G.M."/>
            <person name="Celniker S.E."/>
        </authorList>
    </citation>
    <scope>NUCLEOTIDE SEQUENCE [LARGE SCALE MRNA] OF 513-1241</scope>
    <source>
        <strain>Berkeley</strain>
        <tissue>Head</tissue>
    </source>
</reference>
<reference key="7">
    <citation type="journal article" date="2008" name="J. Proteome Res.">
        <title>Phosphoproteome analysis of Drosophila melanogaster embryos.</title>
        <authorList>
            <person name="Zhai B."/>
            <person name="Villen J."/>
            <person name="Beausoleil S.A."/>
            <person name="Mintseris J."/>
            <person name="Gygi S.P."/>
        </authorList>
    </citation>
    <scope>PHOSPHORYLATION [LARGE SCALE ANALYSIS] AT SER-274; SER-277; SER-401; SER-403 AND SER-434</scope>
    <scope>IDENTIFICATION BY MASS SPECTROMETRY</scope>
    <source>
        <tissue>Embryo</tissue>
    </source>
</reference>
<reference key="8">
    <citation type="journal article" date="2012" name="J. Biol. Chem.">
        <title>Phosphatidylinositol transfer protein, cytoplasmic 1 (PITPNC1) binds and transfers phosphatidic acid.</title>
        <authorList>
            <person name="Garner K."/>
            <person name="Hunt A.N."/>
            <person name="Koster G."/>
            <person name="Somerharju P."/>
            <person name="Groves E."/>
            <person name="Li M."/>
            <person name="Raghu P."/>
            <person name="Holic R."/>
            <person name="Cockcroft S."/>
        </authorList>
    </citation>
    <scope>FUNCTION</scope>
    <scope>CATALYTIC ACTIVITY</scope>
    <scope>MUTAGENESIS OF THR-95</scope>
</reference>
<dbReference type="EMBL" id="X57978">
    <property type="protein sequence ID" value="CAA41044.1"/>
    <property type="status" value="ALT_FRAME"/>
    <property type="molecule type" value="mRNA"/>
</dbReference>
<dbReference type="EMBL" id="Y08035">
    <property type="protein sequence ID" value="CAA69291.1"/>
    <property type="molecule type" value="mRNA"/>
</dbReference>
<dbReference type="EMBL" id="AE014298">
    <property type="protein sequence ID" value="AAF48315.1"/>
    <property type="molecule type" value="Genomic_DNA"/>
</dbReference>
<dbReference type="EMBL" id="AE014298">
    <property type="protein sequence ID" value="AAF48316.2"/>
    <property type="molecule type" value="Genomic_DNA"/>
</dbReference>
<dbReference type="EMBL" id="AE014298">
    <property type="protein sequence ID" value="AAX52494.1"/>
    <property type="molecule type" value="Genomic_DNA"/>
</dbReference>
<dbReference type="EMBL" id="AE014298">
    <property type="protein sequence ID" value="AAX52495.1"/>
    <property type="molecule type" value="Genomic_DNA"/>
</dbReference>
<dbReference type="EMBL" id="AY051422">
    <property type="protein sequence ID" value="AAK92846.1"/>
    <property type="molecule type" value="mRNA"/>
</dbReference>
<dbReference type="EMBL" id="BT011130">
    <property type="protein sequence ID" value="AAR82797.1"/>
    <property type="status" value="ALT_SEQ"/>
    <property type="molecule type" value="mRNA"/>
</dbReference>
<dbReference type="PIR" id="A61221">
    <property type="entry name" value="A61221"/>
</dbReference>
<dbReference type="RefSeq" id="NP_001014740.1">
    <molecule id="P43125-1"/>
    <property type="nucleotide sequence ID" value="NM_001014740.2"/>
</dbReference>
<dbReference type="RefSeq" id="NP_001014741.1">
    <molecule id="P43125-1"/>
    <property type="nucleotide sequence ID" value="NM_001014741.3"/>
</dbReference>
<dbReference type="RefSeq" id="NP_001162749.1">
    <molecule id="P43125-2"/>
    <property type="nucleotide sequence ID" value="NM_001169278.3"/>
</dbReference>
<dbReference type="RefSeq" id="NP_511149.2">
    <molecule id="P43125-2"/>
    <property type="nucleotide sequence ID" value="NM_078594.3"/>
</dbReference>
<dbReference type="RefSeq" id="NP_727733.1">
    <molecule id="P43125-1"/>
    <property type="nucleotide sequence ID" value="NM_167382.3"/>
</dbReference>
<dbReference type="SMR" id="P43125"/>
<dbReference type="BioGRID" id="58713">
    <property type="interactions" value="28"/>
</dbReference>
<dbReference type="FunCoup" id="P43125">
    <property type="interactions" value="618"/>
</dbReference>
<dbReference type="IntAct" id="P43125">
    <property type="interactions" value="5"/>
</dbReference>
<dbReference type="STRING" id="7227.FBpp0304106"/>
<dbReference type="SwissLipids" id="SLP:000000468"/>
<dbReference type="TCDB" id="9.A.78.1.2">
    <property type="family name" value="the retinal degeneration b protein (rdgb) family"/>
</dbReference>
<dbReference type="GlyGen" id="P43125">
    <property type="glycosylation" value="1 site"/>
</dbReference>
<dbReference type="iPTMnet" id="P43125"/>
<dbReference type="PaxDb" id="7227-FBpp0304106"/>
<dbReference type="EnsemblMetazoa" id="FBtr0073822">
    <molecule id="P43125-1"/>
    <property type="protein sequence ID" value="FBpp0073653"/>
    <property type="gene ID" value="FBgn0003218"/>
</dbReference>
<dbReference type="EnsemblMetazoa" id="FBtr0073823">
    <molecule id="P43125-2"/>
    <property type="protein sequence ID" value="FBpp0073654"/>
    <property type="gene ID" value="FBgn0003218"/>
</dbReference>
<dbReference type="EnsemblMetazoa" id="FBtr0100194">
    <molecule id="P43125-1"/>
    <property type="protein sequence ID" value="FBpp0099560"/>
    <property type="gene ID" value="FBgn0003218"/>
</dbReference>
<dbReference type="EnsemblMetazoa" id="FBtr0100195">
    <molecule id="P43125-1"/>
    <property type="protein sequence ID" value="FBpp0099561"/>
    <property type="gene ID" value="FBgn0003218"/>
</dbReference>
<dbReference type="EnsemblMetazoa" id="FBtr0301533">
    <molecule id="P43125-2"/>
    <property type="protein sequence ID" value="FBpp0290748"/>
    <property type="gene ID" value="FBgn0003218"/>
</dbReference>
<dbReference type="GeneID" id="32340"/>
<dbReference type="KEGG" id="dme:Dmel_CG11111"/>
<dbReference type="AGR" id="FB:FBgn0003218"/>
<dbReference type="CTD" id="32340"/>
<dbReference type="FlyBase" id="FBgn0003218">
    <property type="gene designation" value="rdgB"/>
</dbReference>
<dbReference type="VEuPathDB" id="VectorBase:FBgn0003218"/>
<dbReference type="eggNOG" id="KOG3668">
    <property type="taxonomic scope" value="Eukaryota"/>
</dbReference>
<dbReference type="GeneTree" id="ENSGT00940000164860"/>
<dbReference type="InParanoid" id="P43125"/>
<dbReference type="OrthoDB" id="18453at2759"/>
<dbReference type="PhylomeDB" id="P43125"/>
<dbReference type="Reactome" id="R-DME-1483226">
    <property type="pathway name" value="Synthesis of PI"/>
</dbReference>
<dbReference type="BioGRID-ORCS" id="32340">
    <property type="hits" value="0 hits in 3 CRISPR screens"/>
</dbReference>
<dbReference type="GenomeRNAi" id="32340"/>
<dbReference type="PRO" id="PR:P43125"/>
<dbReference type="Proteomes" id="UP000000803">
    <property type="component" value="Chromosome X"/>
</dbReference>
<dbReference type="Bgee" id="FBgn0003218">
    <property type="expression patterns" value="Expressed in adult optic chiasma glial cell (Drosophila) in insect head and 281 other cell types or tissues"/>
</dbReference>
<dbReference type="ExpressionAtlas" id="P43125">
    <property type="expression patterns" value="baseline and differential"/>
</dbReference>
<dbReference type="GO" id="GO:0005737">
    <property type="term" value="C:cytoplasm"/>
    <property type="evidence" value="ECO:0000318"/>
    <property type="project" value="GO_Central"/>
</dbReference>
<dbReference type="GO" id="GO:0016020">
    <property type="term" value="C:membrane"/>
    <property type="evidence" value="ECO:0000304"/>
    <property type="project" value="FlyBase"/>
</dbReference>
<dbReference type="GO" id="GO:0005886">
    <property type="term" value="C:plasma membrane"/>
    <property type="evidence" value="ECO:0000250"/>
    <property type="project" value="FlyBase"/>
</dbReference>
<dbReference type="GO" id="GO:0016029">
    <property type="term" value="C:subrhabdomeral cisterna"/>
    <property type="evidence" value="ECO:0000304"/>
    <property type="project" value="FlyBase"/>
</dbReference>
<dbReference type="GO" id="GO:0046872">
    <property type="term" value="F:metal ion binding"/>
    <property type="evidence" value="ECO:0007669"/>
    <property type="project" value="InterPro"/>
</dbReference>
<dbReference type="GO" id="GO:0070300">
    <property type="term" value="F:phosphatidic acid binding"/>
    <property type="evidence" value="ECO:0000314"/>
    <property type="project" value="UniProtKB"/>
</dbReference>
<dbReference type="GO" id="GO:1990050">
    <property type="term" value="F:phosphatidic acid transfer activity"/>
    <property type="evidence" value="ECO:0000314"/>
    <property type="project" value="UniProtKB"/>
</dbReference>
<dbReference type="GO" id="GO:0031210">
    <property type="term" value="F:phosphatidylcholine binding"/>
    <property type="evidence" value="ECO:0000318"/>
    <property type="project" value="GO_Central"/>
</dbReference>
<dbReference type="GO" id="GO:0008525">
    <property type="term" value="F:phosphatidylcholine transporter activity"/>
    <property type="evidence" value="ECO:0000314"/>
    <property type="project" value="FlyBase"/>
</dbReference>
<dbReference type="GO" id="GO:0035091">
    <property type="term" value="F:phosphatidylinositol binding"/>
    <property type="evidence" value="ECO:0000314"/>
    <property type="project" value="UniProtKB"/>
</dbReference>
<dbReference type="GO" id="GO:0008526">
    <property type="term" value="F:phosphatidylinositol transfer activity"/>
    <property type="evidence" value="ECO:0000314"/>
    <property type="project" value="BHF-UCL"/>
</dbReference>
<dbReference type="GO" id="GO:0006816">
    <property type="term" value="P:calcium ion transport"/>
    <property type="evidence" value="ECO:0007669"/>
    <property type="project" value="UniProtKB-KW"/>
</dbReference>
<dbReference type="GO" id="GO:0071482">
    <property type="term" value="P:cellular response to light stimulus"/>
    <property type="evidence" value="ECO:0000315"/>
    <property type="project" value="FlyBase"/>
</dbReference>
<dbReference type="GO" id="GO:0016056">
    <property type="term" value="P:G protein-coupled opsin signaling pathway"/>
    <property type="evidence" value="ECO:0000315"/>
    <property type="project" value="FlyBase"/>
</dbReference>
<dbReference type="GO" id="GO:0016059">
    <property type="term" value="P:negative regulation of opsin-mediated signaling pathway"/>
    <property type="evidence" value="ECO:0000315"/>
    <property type="project" value="FlyBase"/>
</dbReference>
<dbReference type="GO" id="GO:0046488">
    <property type="term" value="P:phosphatidylinositol metabolic process"/>
    <property type="evidence" value="ECO:0000315"/>
    <property type="project" value="FlyBase"/>
</dbReference>
<dbReference type="GO" id="GO:0015914">
    <property type="term" value="P:phospholipid transport"/>
    <property type="evidence" value="ECO:0000314"/>
    <property type="project" value="BHF-UCL"/>
</dbReference>
<dbReference type="GO" id="GO:0007602">
    <property type="term" value="P:phototransduction"/>
    <property type="evidence" value="ECO:0000315"/>
    <property type="project" value="FlyBase"/>
</dbReference>
<dbReference type="GO" id="GO:0007603">
    <property type="term" value="P:phototransduction, visible light"/>
    <property type="evidence" value="ECO:0000315"/>
    <property type="project" value="FlyBase"/>
</dbReference>
<dbReference type="GO" id="GO:0007608">
    <property type="term" value="P:sensory perception of smell"/>
    <property type="evidence" value="ECO:0000315"/>
    <property type="project" value="FlyBase"/>
</dbReference>
<dbReference type="GO" id="GO:0007601">
    <property type="term" value="P:visual perception"/>
    <property type="evidence" value="ECO:0007669"/>
    <property type="project" value="UniProtKB-KW"/>
</dbReference>
<dbReference type="CDD" id="cd08889">
    <property type="entry name" value="SRPBCC_PITPNM1-2_like"/>
    <property type="match status" value="1"/>
</dbReference>
<dbReference type="FunFam" id="3.40.50.1000:FF:000173">
    <property type="entry name" value="Membrane-associated phosphatidylinositol transfer protein 2"/>
    <property type="match status" value="1"/>
</dbReference>
<dbReference type="FunFam" id="3.30.530.20:FF:000001">
    <property type="entry name" value="Phosphatidylinositol transfer protein membrane associated 2"/>
    <property type="match status" value="1"/>
</dbReference>
<dbReference type="Gene3D" id="3.30.530.20">
    <property type="match status" value="1"/>
</dbReference>
<dbReference type="InterPro" id="IPR004177">
    <property type="entry name" value="DDHD_dom"/>
</dbReference>
<dbReference type="InterPro" id="IPR036412">
    <property type="entry name" value="HAD-like_sf"/>
</dbReference>
<dbReference type="InterPro" id="IPR031315">
    <property type="entry name" value="LNS2/PITP"/>
</dbReference>
<dbReference type="InterPro" id="IPR001666">
    <property type="entry name" value="PI_transfer"/>
</dbReference>
<dbReference type="InterPro" id="IPR055261">
    <property type="entry name" value="PI_transfer_N"/>
</dbReference>
<dbReference type="InterPro" id="IPR023393">
    <property type="entry name" value="START-like_dom_sf"/>
</dbReference>
<dbReference type="PANTHER" id="PTHR10658">
    <property type="entry name" value="PHOSPHATIDYLINOSITOL TRANSFER PROTEIN"/>
    <property type="match status" value="1"/>
</dbReference>
<dbReference type="PANTHER" id="PTHR10658:SF81">
    <property type="entry name" value="PROTEIN RETINAL DEGENERATION B"/>
    <property type="match status" value="1"/>
</dbReference>
<dbReference type="Pfam" id="PF02862">
    <property type="entry name" value="DDHD"/>
    <property type="match status" value="2"/>
</dbReference>
<dbReference type="Pfam" id="PF02121">
    <property type="entry name" value="IP_trans"/>
    <property type="match status" value="1"/>
</dbReference>
<dbReference type="Pfam" id="PF24694">
    <property type="entry name" value="LNS2_PITM1-3"/>
    <property type="match status" value="1"/>
</dbReference>
<dbReference type="Pfam" id="PF24695">
    <property type="entry name" value="PITM1-3"/>
    <property type="match status" value="1"/>
</dbReference>
<dbReference type="PRINTS" id="PR00391">
    <property type="entry name" value="PITRANSFER"/>
</dbReference>
<dbReference type="SMART" id="SM01127">
    <property type="entry name" value="DDHD"/>
    <property type="match status" value="1"/>
</dbReference>
<dbReference type="SMART" id="SM00775">
    <property type="entry name" value="LNS2"/>
    <property type="match status" value="1"/>
</dbReference>
<dbReference type="SUPFAM" id="SSF55961">
    <property type="entry name" value="Bet v1-like"/>
    <property type="match status" value="1"/>
</dbReference>
<dbReference type="SUPFAM" id="SSF56784">
    <property type="entry name" value="HAD-like"/>
    <property type="match status" value="1"/>
</dbReference>
<dbReference type="PROSITE" id="PS51043">
    <property type="entry name" value="DDHD"/>
    <property type="match status" value="1"/>
</dbReference>
<feature type="chain" id="PRO_0000097209" description="Protein retinal degeneration B">
    <location>
        <begin position="1"/>
        <end position="1259"/>
    </location>
</feature>
<feature type="domain" description="DDHD" evidence="1">
    <location>
        <begin position="730"/>
        <end position="913"/>
    </location>
</feature>
<feature type="region of interest" description="Disordered" evidence="2">
    <location>
        <begin position="268"/>
        <end position="378"/>
    </location>
</feature>
<feature type="region of interest" description="Disordered" evidence="2">
    <location>
        <begin position="427"/>
        <end position="454"/>
    </location>
</feature>
<feature type="region of interest" description="Disordered" evidence="2">
    <location>
        <begin position="472"/>
        <end position="500"/>
    </location>
</feature>
<feature type="region of interest" description="Disordered" evidence="2">
    <location>
        <begin position="660"/>
        <end position="692"/>
    </location>
</feature>
<feature type="compositionally biased region" description="Low complexity" evidence="2">
    <location>
        <begin position="284"/>
        <end position="293"/>
    </location>
</feature>
<feature type="compositionally biased region" description="Acidic residues" evidence="2">
    <location>
        <begin position="318"/>
        <end position="335"/>
    </location>
</feature>
<feature type="compositionally biased region" description="Low complexity" evidence="2">
    <location>
        <begin position="347"/>
        <end position="363"/>
    </location>
</feature>
<feature type="compositionally biased region" description="Low complexity" evidence="2">
    <location>
        <begin position="663"/>
        <end position="678"/>
    </location>
</feature>
<feature type="compositionally biased region" description="Polar residues" evidence="2">
    <location>
        <begin position="679"/>
        <end position="689"/>
    </location>
</feature>
<feature type="modified residue" description="Phosphoserine" evidence="3">
    <location>
        <position position="274"/>
    </location>
</feature>
<feature type="modified residue" description="Phosphoserine" evidence="3">
    <location>
        <position position="277"/>
    </location>
</feature>
<feature type="modified residue" description="Phosphoserine" evidence="3">
    <location>
        <position position="401"/>
    </location>
</feature>
<feature type="modified residue" description="Phosphoserine" evidence="3">
    <location>
        <position position="403"/>
    </location>
</feature>
<feature type="modified residue" description="Phosphoserine" evidence="3">
    <location>
        <position position="434"/>
    </location>
</feature>
<feature type="splice variant" id="VSP_014533" description="In isoform B." evidence="6 7">
    <original>YLERKTVSSCCLMVFQTT</original>
    <variation>LHEQATNEN</variation>
    <location>
        <begin position="1242"/>
        <end position="1259"/>
    </location>
</feature>
<feature type="mutagenesis site" description="Increased phosphatidic acid binding but no effect on phosphatidylinositol binding or transfer activity." evidence="5">
    <original>T</original>
    <variation>C</variation>
    <location>
        <position position="95"/>
    </location>
</feature>
<feature type="sequence conflict" description="In Ref. 1; CAA41044/CAA69291." evidence="8" ref="1">
    <original>WNA</original>
    <variation>MEC</variation>
    <location>
        <begin position="89"/>
        <end position="91"/>
    </location>
</feature>
<feature type="sequence conflict" description="In Ref. 1; CAA41044/CAA69291." evidence="8" ref="1">
    <original>QH</original>
    <variation>HD</variation>
    <location>
        <begin position="542"/>
        <end position="543"/>
    </location>
</feature>
<feature type="sequence conflict" description="In Ref. 1; CAA41044/CAA69291." evidence="8" ref="1">
    <original>Y</original>
    <variation>C</variation>
    <location>
        <position position="622"/>
    </location>
</feature>
<feature type="sequence conflict" description="In Ref. 1; CAA41044/CAA69291." evidence="8" ref="1">
    <original>H</original>
    <variation>R</variation>
    <location>
        <position position="824"/>
    </location>
</feature>
<feature type="sequence conflict" description="In Ref. 1; CAA41044/CAA69291." evidence="8" ref="1">
    <original>E</original>
    <variation>Q</variation>
    <location>
        <position position="1002"/>
    </location>
</feature>